<evidence type="ECO:0000255" key="1">
    <source>
        <dbReference type="HAMAP-Rule" id="MF_00719"/>
    </source>
</evidence>
<feature type="chain" id="PRO_1000132560" description="Adenosylcobinamide-GDP ribazoletransferase">
    <location>
        <begin position="1"/>
        <end position="254"/>
    </location>
</feature>
<feature type="transmembrane region" description="Helical" evidence="1">
    <location>
        <begin position="27"/>
        <end position="47"/>
    </location>
</feature>
<feature type="transmembrane region" description="Helical" evidence="1">
    <location>
        <begin position="50"/>
        <end position="70"/>
    </location>
</feature>
<feature type="transmembrane region" description="Helical" evidence="1">
    <location>
        <begin position="104"/>
        <end position="124"/>
    </location>
</feature>
<feature type="transmembrane region" description="Helical" evidence="1">
    <location>
        <begin position="131"/>
        <end position="151"/>
    </location>
</feature>
<feature type="transmembrane region" description="Helical" evidence="1">
    <location>
        <begin position="170"/>
        <end position="190"/>
    </location>
</feature>
<feature type="transmembrane region" description="Helical" evidence="1">
    <location>
        <begin position="194"/>
        <end position="214"/>
    </location>
</feature>
<feature type="transmembrane region" description="Helical" evidence="1">
    <location>
        <begin position="233"/>
        <end position="253"/>
    </location>
</feature>
<name>COBS_CHLP8</name>
<sequence>MLSGLVTALRTLTVLPVPGRDAERFSSSLYWFPVVGLVIGGIVVLFARAGMGAGWPELAAVLALLGGFILTRGLHADGLADLADGFFGGRNREAALRIMKDPNVGSFGSLALIGVMLFKWICLLELARAGAYGMIAAGVVLSRTAQVLLAARMPYARSEGGTATAFVEDAGWPHLLVASVSGVVLLFVLLDWQVVPSSILLFGSVVALFFVGWLSHRKIGGITGDVLGACSELVEIAVWFVAALWLKGLFSAIA</sequence>
<organism>
    <name type="scientific">Chlorobaculum parvum (strain DSM 263 / NCIMB 8327)</name>
    <name type="common">Chlorobium vibrioforme subsp. thiosulfatophilum</name>
    <dbReference type="NCBI Taxonomy" id="517417"/>
    <lineage>
        <taxon>Bacteria</taxon>
        <taxon>Pseudomonadati</taxon>
        <taxon>Chlorobiota</taxon>
        <taxon>Chlorobiia</taxon>
        <taxon>Chlorobiales</taxon>
        <taxon>Chlorobiaceae</taxon>
        <taxon>Chlorobaculum</taxon>
    </lineage>
</organism>
<protein>
    <recommendedName>
        <fullName evidence="1">Adenosylcobinamide-GDP ribazoletransferase</fullName>
        <ecNumber evidence="1">2.7.8.26</ecNumber>
    </recommendedName>
    <alternativeName>
        <fullName evidence="1">Cobalamin synthase</fullName>
    </alternativeName>
    <alternativeName>
        <fullName evidence="1">Cobalamin-5'-phosphate synthase</fullName>
    </alternativeName>
</protein>
<proteinExistence type="inferred from homology"/>
<gene>
    <name evidence="1" type="primary">cobS</name>
    <name type="ordered locus">Cpar_1171</name>
</gene>
<comment type="function">
    <text evidence="1">Joins adenosylcobinamide-GDP and alpha-ribazole to generate adenosylcobalamin (Ado-cobalamin). Also synthesizes adenosylcobalamin 5'-phosphate from adenosylcobinamide-GDP and alpha-ribazole 5'-phosphate.</text>
</comment>
<comment type="catalytic activity">
    <reaction evidence="1">
        <text>alpha-ribazole + adenosylcob(III)inamide-GDP = adenosylcob(III)alamin + GMP + H(+)</text>
        <dbReference type="Rhea" id="RHEA:16049"/>
        <dbReference type="ChEBI" id="CHEBI:10329"/>
        <dbReference type="ChEBI" id="CHEBI:15378"/>
        <dbReference type="ChEBI" id="CHEBI:18408"/>
        <dbReference type="ChEBI" id="CHEBI:58115"/>
        <dbReference type="ChEBI" id="CHEBI:60487"/>
        <dbReference type="EC" id="2.7.8.26"/>
    </reaction>
</comment>
<comment type="catalytic activity">
    <reaction evidence="1">
        <text>alpha-ribazole 5'-phosphate + adenosylcob(III)inamide-GDP = adenosylcob(III)alamin 5'-phosphate + GMP + H(+)</text>
        <dbReference type="Rhea" id="RHEA:23560"/>
        <dbReference type="ChEBI" id="CHEBI:15378"/>
        <dbReference type="ChEBI" id="CHEBI:57918"/>
        <dbReference type="ChEBI" id="CHEBI:58115"/>
        <dbReference type="ChEBI" id="CHEBI:60487"/>
        <dbReference type="ChEBI" id="CHEBI:60493"/>
        <dbReference type="EC" id="2.7.8.26"/>
    </reaction>
</comment>
<comment type="cofactor">
    <cofactor evidence="1">
        <name>Mg(2+)</name>
        <dbReference type="ChEBI" id="CHEBI:18420"/>
    </cofactor>
</comment>
<comment type="pathway">
    <text evidence="1">Cofactor biosynthesis; adenosylcobalamin biosynthesis; adenosylcobalamin from cob(II)yrinate a,c-diamide: step 7/7.</text>
</comment>
<comment type="subcellular location">
    <subcellularLocation>
        <location evidence="1">Cell inner membrane</location>
        <topology evidence="1">Multi-pass membrane protein</topology>
    </subcellularLocation>
</comment>
<comment type="similarity">
    <text evidence="1">Belongs to the CobS family.</text>
</comment>
<reference key="1">
    <citation type="submission" date="2008-06" db="EMBL/GenBank/DDBJ databases">
        <title>Complete sequence of Chlorobaculum parvum NCIB 8327.</title>
        <authorList>
            <consortium name="US DOE Joint Genome Institute"/>
            <person name="Lucas S."/>
            <person name="Copeland A."/>
            <person name="Lapidus A."/>
            <person name="Glavina del Rio T."/>
            <person name="Dalin E."/>
            <person name="Tice H."/>
            <person name="Bruce D."/>
            <person name="Goodwin L."/>
            <person name="Pitluck S."/>
            <person name="Schmutz J."/>
            <person name="Larimer F."/>
            <person name="Land M."/>
            <person name="Hauser L."/>
            <person name="Kyrpides N."/>
            <person name="Mikhailova N."/>
            <person name="Zhao F."/>
            <person name="Li T."/>
            <person name="Liu Z."/>
            <person name="Overmann J."/>
            <person name="Bryant D.A."/>
            <person name="Richardson P."/>
        </authorList>
    </citation>
    <scope>NUCLEOTIDE SEQUENCE [LARGE SCALE GENOMIC DNA]</scope>
    <source>
        <strain>DSM 263 / NCIMB 8327</strain>
    </source>
</reference>
<accession>B3QNS4</accession>
<dbReference type="EC" id="2.7.8.26" evidence="1"/>
<dbReference type="EMBL" id="CP001099">
    <property type="protein sequence ID" value="ACF11577.1"/>
    <property type="molecule type" value="Genomic_DNA"/>
</dbReference>
<dbReference type="RefSeq" id="WP_012502410.1">
    <property type="nucleotide sequence ID" value="NC_011027.1"/>
</dbReference>
<dbReference type="STRING" id="517417.Cpar_1171"/>
<dbReference type="KEGG" id="cpc:Cpar_1171"/>
<dbReference type="eggNOG" id="COG0368">
    <property type="taxonomic scope" value="Bacteria"/>
</dbReference>
<dbReference type="HOGENOM" id="CLU_057426_1_1_10"/>
<dbReference type="OrthoDB" id="9794626at2"/>
<dbReference type="UniPathway" id="UPA00148">
    <property type="reaction ID" value="UER00238"/>
</dbReference>
<dbReference type="Proteomes" id="UP000008811">
    <property type="component" value="Chromosome"/>
</dbReference>
<dbReference type="GO" id="GO:0005886">
    <property type="term" value="C:plasma membrane"/>
    <property type="evidence" value="ECO:0007669"/>
    <property type="project" value="UniProtKB-SubCell"/>
</dbReference>
<dbReference type="GO" id="GO:0051073">
    <property type="term" value="F:adenosylcobinamide-GDP ribazoletransferase activity"/>
    <property type="evidence" value="ECO:0007669"/>
    <property type="project" value="UniProtKB-UniRule"/>
</dbReference>
<dbReference type="GO" id="GO:0008818">
    <property type="term" value="F:cobalamin 5'-phosphate synthase activity"/>
    <property type="evidence" value="ECO:0007669"/>
    <property type="project" value="UniProtKB-UniRule"/>
</dbReference>
<dbReference type="GO" id="GO:0009236">
    <property type="term" value="P:cobalamin biosynthetic process"/>
    <property type="evidence" value="ECO:0007669"/>
    <property type="project" value="UniProtKB-UniRule"/>
</dbReference>
<dbReference type="HAMAP" id="MF_00719">
    <property type="entry name" value="CobS"/>
    <property type="match status" value="1"/>
</dbReference>
<dbReference type="InterPro" id="IPR003805">
    <property type="entry name" value="CobS"/>
</dbReference>
<dbReference type="NCBIfam" id="TIGR00317">
    <property type="entry name" value="cobS"/>
    <property type="match status" value="1"/>
</dbReference>
<dbReference type="PANTHER" id="PTHR34148">
    <property type="entry name" value="ADENOSYLCOBINAMIDE-GDP RIBAZOLETRANSFERASE"/>
    <property type="match status" value="1"/>
</dbReference>
<dbReference type="PANTHER" id="PTHR34148:SF1">
    <property type="entry name" value="ADENOSYLCOBINAMIDE-GDP RIBAZOLETRANSFERASE"/>
    <property type="match status" value="1"/>
</dbReference>
<dbReference type="Pfam" id="PF02654">
    <property type="entry name" value="CobS"/>
    <property type="match status" value="1"/>
</dbReference>
<keyword id="KW-0997">Cell inner membrane</keyword>
<keyword id="KW-1003">Cell membrane</keyword>
<keyword id="KW-0169">Cobalamin biosynthesis</keyword>
<keyword id="KW-0460">Magnesium</keyword>
<keyword id="KW-0472">Membrane</keyword>
<keyword id="KW-0808">Transferase</keyword>
<keyword id="KW-0812">Transmembrane</keyword>
<keyword id="KW-1133">Transmembrane helix</keyword>